<feature type="chain" id="PRO_0000083801" description="3-isopropylmalate dehydrogenase">
    <location>
        <begin position="1"/>
        <end position="336"/>
    </location>
</feature>
<feature type="binding site" evidence="1">
    <location>
        <position position="87"/>
    </location>
    <ligand>
        <name>substrate</name>
    </ligand>
</feature>
<feature type="binding site" evidence="1">
    <location>
        <position position="97"/>
    </location>
    <ligand>
        <name>substrate</name>
    </ligand>
</feature>
<feature type="binding site" evidence="1">
    <location>
        <position position="121"/>
    </location>
    <ligand>
        <name>substrate</name>
    </ligand>
</feature>
<feature type="binding site" evidence="1">
    <location>
        <position position="211"/>
    </location>
    <ligand>
        <name>Mg(2+)</name>
        <dbReference type="ChEBI" id="CHEBI:18420"/>
    </ligand>
</feature>
<feature type="binding site" evidence="1">
    <location>
        <position position="211"/>
    </location>
    <ligand>
        <name>substrate</name>
    </ligand>
</feature>
<feature type="binding site" evidence="1">
    <location>
        <position position="235"/>
    </location>
    <ligand>
        <name>Mg(2+)</name>
        <dbReference type="ChEBI" id="CHEBI:18420"/>
    </ligand>
</feature>
<feature type="binding site" evidence="1">
    <location>
        <position position="239"/>
    </location>
    <ligand>
        <name>Mg(2+)</name>
        <dbReference type="ChEBI" id="CHEBI:18420"/>
    </ligand>
</feature>
<feature type="binding site" evidence="1">
    <location>
        <begin position="271"/>
        <end position="283"/>
    </location>
    <ligand>
        <name>NAD(+)</name>
        <dbReference type="ChEBI" id="CHEBI:57540"/>
    </ligand>
</feature>
<feature type="site" description="Important for catalysis" evidence="1">
    <location>
        <position position="128"/>
    </location>
</feature>
<feature type="site" description="Important for catalysis" evidence="1">
    <location>
        <position position="178"/>
    </location>
</feature>
<protein>
    <recommendedName>
        <fullName>3-isopropylmalate dehydrogenase</fullName>
        <ecNumber>1.1.1.85</ecNumber>
    </recommendedName>
    <alternativeName>
        <fullName>3-IPM-DH</fullName>
    </alternativeName>
    <alternativeName>
        <fullName>Beta-IPM dehydrogenase</fullName>
        <shortName>IMDH</shortName>
    </alternativeName>
</protein>
<dbReference type="EC" id="1.1.1.85"/>
<dbReference type="EMBL" id="Z99263">
    <property type="protein sequence ID" value="CAB16441.1"/>
    <property type="molecule type" value="Genomic_DNA"/>
</dbReference>
<dbReference type="EMBL" id="AL583923">
    <property type="protein sequence ID" value="CAC30644.1"/>
    <property type="molecule type" value="Genomic_DNA"/>
</dbReference>
<dbReference type="PIR" id="T45419">
    <property type="entry name" value="T45419"/>
</dbReference>
<dbReference type="RefSeq" id="NP_302162.1">
    <property type="nucleotide sequence ID" value="NC_002677.1"/>
</dbReference>
<dbReference type="RefSeq" id="WP_010908483.1">
    <property type="nucleotide sequence ID" value="NC_002677.1"/>
</dbReference>
<dbReference type="SMR" id="O33117"/>
<dbReference type="STRING" id="272631.gene:17575536"/>
<dbReference type="KEGG" id="mle:ML1691"/>
<dbReference type="PATRIC" id="fig|272631.5.peg.3188"/>
<dbReference type="Leproma" id="ML1691"/>
<dbReference type="eggNOG" id="COG0473">
    <property type="taxonomic scope" value="Bacteria"/>
</dbReference>
<dbReference type="HOGENOM" id="CLU_031953_0_1_11"/>
<dbReference type="OrthoDB" id="5289857at2"/>
<dbReference type="UniPathway" id="UPA00048">
    <property type="reaction ID" value="UER00072"/>
</dbReference>
<dbReference type="Proteomes" id="UP000000806">
    <property type="component" value="Chromosome"/>
</dbReference>
<dbReference type="GO" id="GO:0005737">
    <property type="term" value="C:cytoplasm"/>
    <property type="evidence" value="ECO:0007669"/>
    <property type="project" value="UniProtKB-SubCell"/>
</dbReference>
<dbReference type="GO" id="GO:0003862">
    <property type="term" value="F:3-isopropylmalate dehydrogenase activity"/>
    <property type="evidence" value="ECO:0007669"/>
    <property type="project" value="UniProtKB-UniRule"/>
</dbReference>
<dbReference type="GO" id="GO:0000287">
    <property type="term" value="F:magnesium ion binding"/>
    <property type="evidence" value="ECO:0007669"/>
    <property type="project" value="InterPro"/>
</dbReference>
<dbReference type="GO" id="GO:0051287">
    <property type="term" value="F:NAD binding"/>
    <property type="evidence" value="ECO:0007669"/>
    <property type="project" value="InterPro"/>
</dbReference>
<dbReference type="GO" id="GO:0009098">
    <property type="term" value="P:L-leucine biosynthetic process"/>
    <property type="evidence" value="ECO:0007669"/>
    <property type="project" value="UniProtKB-UniRule"/>
</dbReference>
<dbReference type="Gene3D" id="3.40.718.10">
    <property type="entry name" value="Isopropylmalate Dehydrogenase"/>
    <property type="match status" value="1"/>
</dbReference>
<dbReference type="HAMAP" id="MF_01035">
    <property type="entry name" value="LeuB_type2"/>
    <property type="match status" value="1"/>
</dbReference>
<dbReference type="InterPro" id="IPR050501">
    <property type="entry name" value="ICDH/IPMDH"/>
</dbReference>
<dbReference type="InterPro" id="IPR019818">
    <property type="entry name" value="IsoCit/isopropylmalate_DH_CS"/>
</dbReference>
<dbReference type="InterPro" id="IPR024084">
    <property type="entry name" value="IsoPropMal-DH-like_dom"/>
</dbReference>
<dbReference type="InterPro" id="IPR023698">
    <property type="entry name" value="LeuB_actb"/>
</dbReference>
<dbReference type="NCBIfam" id="NF002898">
    <property type="entry name" value="PRK03437.1"/>
    <property type="match status" value="1"/>
</dbReference>
<dbReference type="PANTHER" id="PTHR43275">
    <property type="entry name" value="D-MALATE DEHYDROGENASE [DECARBOXYLATING]"/>
    <property type="match status" value="1"/>
</dbReference>
<dbReference type="PANTHER" id="PTHR43275:SF1">
    <property type="entry name" value="D-MALATE DEHYDROGENASE [DECARBOXYLATING]"/>
    <property type="match status" value="1"/>
</dbReference>
<dbReference type="Pfam" id="PF00180">
    <property type="entry name" value="Iso_dh"/>
    <property type="match status" value="1"/>
</dbReference>
<dbReference type="SMART" id="SM01329">
    <property type="entry name" value="Iso_dh"/>
    <property type="match status" value="1"/>
</dbReference>
<dbReference type="SUPFAM" id="SSF53659">
    <property type="entry name" value="Isocitrate/Isopropylmalate dehydrogenase-like"/>
    <property type="match status" value="1"/>
</dbReference>
<dbReference type="PROSITE" id="PS00470">
    <property type="entry name" value="IDH_IMDH"/>
    <property type="match status" value="1"/>
</dbReference>
<name>LEU3_MYCLE</name>
<reference key="1">
    <citation type="journal article" date="2001" name="Nature">
        <title>Massive gene decay in the leprosy bacillus.</title>
        <authorList>
            <person name="Cole S.T."/>
            <person name="Eiglmeier K."/>
            <person name="Parkhill J."/>
            <person name="James K.D."/>
            <person name="Thomson N.R."/>
            <person name="Wheeler P.R."/>
            <person name="Honore N."/>
            <person name="Garnier T."/>
            <person name="Churcher C.M."/>
            <person name="Harris D.E."/>
            <person name="Mungall K.L."/>
            <person name="Basham D."/>
            <person name="Brown D."/>
            <person name="Chillingworth T."/>
            <person name="Connor R."/>
            <person name="Davies R.M."/>
            <person name="Devlin K."/>
            <person name="Duthoy S."/>
            <person name="Feltwell T."/>
            <person name="Fraser A."/>
            <person name="Hamlin N."/>
            <person name="Holroyd S."/>
            <person name="Hornsby T."/>
            <person name="Jagels K."/>
            <person name="Lacroix C."/>
            <person name="Maclean J."/>
            <person name="Moule S."/>
            <person name="Murphy L.D."/>
            <person name="Oliver K."/>
            <person name="Quail M.A."/>
            <person name="Rajandream M.A."/>
            <person name="Rutherford K.M."/>
            <person name="Rutter S."/>
            <person name="Seeger K."/>
            <person name="Simon S."/>
            <person name="Simmonds M."/>
            <person name="Skelton J."/>
            <person name="Squares R."/>
            <person name="Squares S."/>
            <person name="Stevens K."/>
            <person name="Taylor K."/>
            <person name="Whitehead S."/>
            <person name="Woodward J.R."/>
            <person name="Barrell B.G."/>
        </authorList>
    </citation>
    <scope>NUCLEOTIDE SEQUENCE [LARGE SCALE GENOMIC DNA]</scope>
    <source>
        <strain>TN</strain>
    </source>
</reference>
<proteinExistence type="inferred from homology"/>
<organism>
    <name type="scientific">Mycobacterium leprae (strain TN)</name>
    <dbReference type="NCBI Taxonomy" id="272631"/>
    <lineage>
        <taxon>Bacteria</taxon>
        <taxon>Bacillati</taxon>
        <taxon>Actinomycetota</taxon>
        <taxon>Actinomycetes</taxon>
        <taxon>Mycobacteriales</taxon>
        <taxon>Mycobacteriaceae</taxon>
        <taxon>Mycobacterium</taxon>
    </lineage>
</organism>
<keyword id="KW-0028">Amino-acid biosynthesis</keyword>
<keyword id="KW-0100">Branched-chain amino acid biosynthesis</keyword>
<keyword id="KW-0963">Cytoplasm</keyword>
<keyword id="KW-0432">Leucine biosynthesis</keyword>
<keyword id="KW-0460">Magnesium</keyword>
<keyword id="KW-0464">Manganese</keyword>
<keyword id="KW-0479">Metal-binding</keyword>
<keyword id="KW-0520">NAD</keyword>
<keyword id="KW-0560">Oxidoreductase</keyword>
<keyword id="KW-1185">Reference proteome</keyword>
<sequence>MKLAIIGGDGIGPEVVAQAVKILDVVLPGVQKTTYDLGARRYHTTGELLPESVLAELREHDAILLGAVGDPSVPSGVLERGLLLRLRFELDHHINLRPARLYPGVNSLLAGKPDIDFVVVREGTEGPYTGTGGAIRVGTPNEVATEVSVNTAFGVRRVVQDAFERARQRRKHLTLVHKNNVLTYAGTLWCRIVQEVGEKYPDVEVVYQHIDAATIYLVTEPSRFDVIVTDNLFGDIITDLAAAVCGGIALAASGNIDATRTNPSMFEPVHGSAPDIAGQGIADPTAAIMSLALLLAHLGEDEPAARLDQAVASYLATRGNGRFSTGEVGERIAAAL</sequence>
<gene>
    <name type="primary">leuB</name>
    <name type="ordered locus">ML1691</name>
    <name type="ORF">MLCB637.26</name>
</gene>
<comment type="function">
    <text evidence="1">Catalyzes the oxidation of 3-carboxy-2-hydroxy-4-methylpentanoate (3-isopropylmalate) to 3-carboxy-4-methyl-2-oxopentanoate. The product decarboxylates to 4-methyl-2 oxopentanoate (By similarity).</text>
</comment>
<comment type="catalytic activity">
    <reaction>
        <text>(2R,3S)-3-isopropylmalate + NAD(+) = 4-methyl-2-oxopentanoate + CO2 + NADH</text>
        <dbReference type="Rhea" id="RHEA:32271"/>
        <dbReference type="ChEBI" id="CHEBI:16526"/>
        <dbReference type="ChEBI" id="CHEBI:17865"/>
        <dbReference type="ChEBI" id="CHEBI:35121"/>
        <dbReference type="ChEBI" id="CHEBI:57540"/>
        <dbReference type="ChEBI" id="CHEBI:57945"/>
        <dbReference type="EC" id="1.1.1.85"/>
    </reaction>
</comment>
<comment type="cofactor">
    <cofactor evidence="1">
        <name>Mg(2+)</name>
        <dbReference type="ChEBI" id="CHEBI:18420"/>
    </cofactor>
    <cofactor evidence="1">
        <name>Mn(2+)</name>
        <dbReference type="ChEBI" id="CHEBI:29035"/>
    </cofactor>
    <text evidence="1">Binds 1 Mg(2+) or Mn(2+) ion per subunit.</text>
</comment>
<comment type="pathway">
    <text>Amino-acid biosynthesis; L-leucine biosynthesis; L-leucine from 3-methyl-2-oxobutanoate: step 3/4.</text>
</comment>
<comment type="subunit">
    <text evidence="1">Homodimer.</text>
</comment>
<comment type="subcellular location">
    <subcellularLocation>
        <location evidence="1">Cytoplasm</location>
    </subcellularLocation>
</comment>
<comment type="similarity">
    <text evidence="2">Belongs to the isocitrate and isopropylmalate dehydrogenases family. LeuB type 2 subfamily.</text>
</comment>
<accession>O33117</accession>
<evidence type="ECO:0000250" key="1"/>
<evidence type="ECO:0000305" key="2"/>